<comment type="function">
    <text evidence="1">Transcriptional activator. Functions as a switch in neuronal development, participating in the differentiation of embryonic neuroectodermal cells into neural tissues by making the ectodermal cells responsive to FGF-neuralizing signals (By similarity). Downstream SRRT target that mediates the promotion of neural stem cell self-renewal (By similarity).</text>
</comment>
<comment type="subcellular location">
    <subcellularLocation>
        <location evidence="4 5">Nucleus</location>
    </subcellularLocation>
</comment>
<comment type="domain">
    <text evidence="3">The 9aaTAD motif is a transactivation domain present in a large number of yeast and animal transcription factors.</text>
</comment>
<name>SOX2_XENTR</name>
<proteinExistence type="evidence at transcript level"/>
<feature type="chain" id="PRO_0000378065" description="Transcription factor Sox-2">
    <location>
        <begin position="1"/>
        <end position="311"/>
    </location>
</feature>
<feature type="DNA-binding region" description="HMG box" evidence="5">
    <location>
        <begin position="37"/>
        <end position="105"/>
    </location>
</feature>
<feature type="region of interest" description="Disordered" evidence="6">
    <location>
        <begin position="1"/>
        <end position="40"/>
    </location>
</feature>
<feature type="region of interest" description="Disordered" evidence="6">
    <location>
        <begin position="232"/>
        <end position="259"/>
    </location>
</feature>
<feature type="short sequence motif" description="9aaTAD" evidence="3">
    <location>
        <begin position="266"/>
        <end position="274"/>
    </location>
</feature>
<feature type="compositionally biased region" description="Low complexity" evidence="6">
    <location>
        <begin position="15"/>
        <end position="32"/>
    </location>
</feature>
<feature type="compositionally biased region" description="Low complexity" evidence="6">
    <location>
        <begin position="233"/>
        <end position="255"/>
    </location>
</feature>
<keyword id="KW-0010">Activator</keyword>
<keyword id="KW-0217">Developmental protein</keyword>
<keyword id="KW-0221">Differentiation</keyword>
<keyword id="KW-0238">DNA-binding</keyword>
<keyword id="KW-0524">Neurogenesis</keyword>
<keyword id="KW-0539">Nucleus</keyword>
<keyword id="KW-1185">Reference proteome</keyword>
<keyword id="KW-0804">Transcription</keyword>
<keyword id="KW-0805">Transcription regulation</keyword>
<gene>
    <name evidence="7" type="primary">sox2</name>
    <name type="ORF">TNeu054c10.1</name>
</gene>
<accession>Q6NVN0</accession>
<sequence>MYNMMETDLKPPAPQQASGGNSNSGSNNQSKNSPDRVKRPMNAFMVWSRGQRRKMAQENPKMHNSEISKRLGAEWKLLSEAEKRPFIDEAKRLRALHMKEHPDYKYRPRRKTKTLMKKDKYTLPGGLLAPGANPMTSGVGASLGAGVNQRMDTYAHMNGWTNGGYGMMQEQLGYPQHPGLSAHNAPQMQPMHRYDVSALQYNSMSSSQTYMNGSPTYSMSYSQQGAPGMSLGSMGSVVKSESSSSPPVVTSSSHSRAPCQAGDLRDMISMYLPGAEVPEPAAQSRLHMSQHYQSASVAGTAINGTLPLSHM</sequence>
<organism>
    <name type="scientific">Xenopus tropicalis</name>
    <name type="common">Western clawed frog</name>
    <name type="synonym">Silurana tropicalis</name>
    <dbReference type="NCBI Taxonomy" id="8364"/>
    <lineage>
        <taxon>Eukaryota</taxon>
        <taxon>Metazoa</taxon>
        <taxon>Chordata</taxon>
        <taxon>Craniata</taxon>
        <taxon>Vertebrata</taxon>
        <taxon>Euteleostomi</taxon>
        <taxon>Amphibia</taxon>
        <taxon>Batrachia</taxon>
        <taxon>Anura</taxon>
        <taxon>Pipoidea</taxon>
        <taxon>Pipidae</taxon>
        <taxon>Xenopodinae</taxon>
        <taxon>Xenopus</taxon>
        <taxon>Silurana</taxon>
    </lineage>
</organism>
<reference evidence="8" key="1">
    <citation type="submission" date="2006-10" db="EMBL/GenBank/DDBJ databases">
        <authorList>
            <consortium name="Sanger Xenopus tropicalis EST/cDNA project"/>
        </authorList>
    </citation>
    <scope>NUCLEOTIDE SEQUENCE [LARGE SCALE MRNA]</scope>
    <source>
        <tissue evidence="8">Neurula</tissue>
    </source>
</reference>
<reference evidence="8" key="2">
    <citation type="submission" date="2004-03" db="EMBL/GenBank/DDBJ databases">
        <authorList>
            <consortium name="NIH - Xenopus Gene Collection (XGC) project"/>
        </authorList>
    </citation>
    <scope>NUCLEOTIDE SEQUENCE [LARGE SCALE MRNA]</scope>
    <source>
        <tissue evidence="7">Embryo</tissue>
    </source>
</reference>
<dbReference type="EMBL" id="CR760314">
    <property type="protein sequence ID" value="CAJ82651.1"/>
    <property type="molecule type" value="mRNA"/>
</dbReference>
<dbReference type="EMBL" id="BC067975">
    <property type="protein sequence ID" value="AAH67975.1"/>
    <property type="molecule type" value="mRNA"/>
</dbReference>
<dbReference type="RefSeq" id="NP_998869.1">
    <property type="nucleotide sequence ID" value="NM_213704.3"/>
</dbReference>
<dbReference type="SMR" id="Q6NVN0"/>
<dbReference type="FunCoup" id="Q6NVN0">
    <property type="interactions" value="1440"/>
</dbReference>
<dbReference type="STRING" id="8364.ENSXETP00000032478"/>
<dbReference type="PaxDb" id="8364-ENSXETP00000004031"/>
<dbReference type="DNASU" id="407873"/>
<dbReference type="GeneID" id="407873"/>
<dbReference type="KEGG" id="xtr:407873"/>
<dbReference type="AGR" id="Xenbase:XB-GENE-484553"/>
<dbReference type="CTD" id="6657"/>
<dbReference type="Xenbase" id="XB-GENE-484553">
    <property type="gene designation" value="sox2"/>
</dbReference>
<dbReference type="eggNOG" id="KOG0527">
    <property type="taxonomic scope" value="Eukaryota"/>
</dbReference>
<dbReference type="HOGENOM" id="CLU_021123_0_0_1"/>
<dbReference type="InParanoid" id="Q6NVN0"/>
<dbReference type="OMA" id="YNMMETD"/>
<dbReference type="OrthoDB" id="6247875at2759"/>
<dbReference type="PhylomeDB" id="Q6NVN0"/>
<dbReference type="TreeFam" id="TF351735"/>
<dbReference type="Reactome" id="R-XTR-3769402">
    <property type="pathway name" value="Deactivation of the beta-catenin transactivating complex"/>
</dbReference>
<dbReference type="Proteomes" id="UP000008143">
    <property type="component" value="Chromosome 5"/>
</dbReference>
<dbReference type="Bgee" id="ENSXETG00000036807">
    <property type="expression patterns" value="Expressed in neurula embryo and 9 other cell types or tissues"/>
</dbReference>
<dbReference type="ExpressionAtlas" id="Q6NVN0">
    <property type="expression patterns" value="baseline"/>
</dbReference>
<dbReference type="GO" id="GO:0005737">
    <property type="term" value="C:cytoplasm"/>
    <property type="evidence" value="ECO:0000250"/>
    <property type="project" value="UniProtKB"/>
</dbReference>
<dbReference type="GO" id="GO:0005634">
    <property type="term" value="C:nucleus"/>
    <property type="evidence" value="ECO:0000250"/>
    <property type="project" value="UniProtKB"/>
</dbReference>
<dbReference type="GO" id="GO:0003682">
    <property type="term" value="F:chromatin binding"/>
    <property type="evidence" value="ECO:0007669"/>
    <property type="project" value="Ensembl"/>
</dbReference>
<dbReference type="GO" id="GO:0003700">
    <property type="term" value="F:DNA-binding transcription factor activity"/>
    <property type="evidence" value="ECO:0007669"/>
    <property type="project" value="Ensembl"/>
</dbReference>
<dbReference type="GO" id="GO:0043565">
    <property type="term" value="F:sequence-specific DNA binding"/>
    <property type="evidence" value="ECO:0000250"/>
    <property type="project" value="UniProtKB"/>
</dbReference>
<dbReference type="GO" id="GO:0008283">
    <property type="term" value="P:cell population proliferation"/>
    <property type="evidence" value="ECO:0007669"/>
    <property type="project" value="Ensembl"/>
</dbReference>
<dbReference type="GO" id="GO:0021538">
    <property type="term" value="P:epithalamus development"/>
    <property type="evidence" value="ECO:0007669"/>
    <property type="project" value="Ensembl"/>
</dbReference>
<dbReference type="GO" id="GO:0048592">
    <property type="term" value="P:eye morphogenesis"/>
    <property type="evidence" value="ECO:0007669"/>
    <property type="project" value="Ensembl"/>
</dbReference>
<dbReference type="GO" id="GO:0031101">
    <property type="term" value="P:fin regeneration"/>
    <property type="evidence" value="ECO:0007669"/>
    <property type="project" value="Ensembl"/>
</dbReference>
<dbReference type="GO" id="GO:0060119">
    <property type="term" value="P:inner ear receptor cell development"/>
    <property type="evidence" value="ECO:0007669"/>
    <property type="project" value="Ensembl"/>
</dbReference>
<dbReference type="GO" id="GO:0007399">
    <property type="term" value="P:nervous system development"/>
    <property type="evidence" value="ECO:0000250"/>
    <property type="project" value="UniProtKB"/>
</dbReference>
<dbReference type="GO" id="GO:1905040">
    <property type="term" value="P:otic placode development"/>
    <property type="evidence" value="ECO:0007669"/>
    <property type="project" value="Ensembl"/>
</dbReference>
<dbReference type="GO" id="GO:0071599">
    <property type="term" value="P:otic vesicle development"/>
    <property type="evidence" value="ECO:0007669"/>
    <property type="project" value="Ensembl"/>
</dbReference>
<dbReference type="GO" id="GO:0021982">
    <property type="term" value="P:pineal gland development"/>
    <property type="evidence" value="ECO:0007669"/>
    <property type="project" value="Ensembl"/>
</dbReference>
<dbReference type="GO" id="GO:0045893">
    <property type="term" value="P:positive regulation of DNA-templated transcription"/>
    <property type="evidence" value="ECO:0000250"/>
    <property type="project" value="UniProtKB"/>
</dbReference>
<dbReference type="GO" id="GO:0045944">
    <property type="term" value="P:positive regulation of transcription by RNA polymerase II"/>
    <property type="evidence" value="ECO:0000250"/>
    <property type="project" value="UniProtKB"/>
</dbReference>
<dbReference type="GO" id="GO:1905812">
    <property type="term" value="P:regulation of motor neuron axon guidance"/>
    <property type="evidence" value="ECO:0007669"/>
    <property type="project" value="Ensembl"/>
</dbReference>
<dbReference type="GO" id="GO:0021522">
    <property type="term" value="P:spinal cord motor neuron differentiation"/>
    <property type="evidence" value="ECO:0007669"/>
    <property type="project" value="Ensembl"/>
</dbReference>
<dbReference type="CDD" id="cd01388">
    <property type="entry name" value="HMG-box_SoxB"/>
    <property type="match status" value="1"/>
</dbReference>
<dbReference type="FunFam" id="1.10.30.10:FF:000002">
    <property type="entry name" value="transcription factor Sox-2"/>
    <property type="match status" value="1"/>
</dbReference>
<dbReference type="Gene3D" id="1.10.30.10">
    <property type="entry name" value="High mobility group box domain"/>
    <property type="match status" value="1"/>
</dbReference>
<dbReference type="InterPro" id="IPR009071">
    <property type="entry name" value="HMG_box_dom"/>
</dbReference>
<dbReference type="InterPro" id="IPR036910">
    <property type="entry name" value="HMG_box_dom_sf"/>
</dbReference>
<dbReference type="InterPro" id="IPR022097">
    <property type="entry name" value="SOX_fam"/>
</dbReference>
<dbReference type="InterPro" id="IPR050140">
    <property type="entry name" value="SRY-related_HMG-box_TF-like"/>
</dbReference>
<dbReference type="PANTHER" id="PTHR10270">
    <property type="entry name" value="SOX TRANSCRIPTION FACTOR"/>
    <property type="match status" value="1"/>
</dbReference>
<dbReference type="PANTHER" id="PTHR10270:SF231">
    <property type="entry name" value="TRANSCRIPTION FACTOR SOX-2"/>
    <property type="match status" value="1"/>
</dbReference>
<dbReference type="Pfam" id="PF00505">
    <property type="entry name" value="HMG_box"/>
    <property type="match status" value="1"/>
</dbReference>
<dbReference type="Pfam" id="PF12336">
    <property type="entry name" value="SOXp"/>
    <property type="match status" value="1"/>
</dbReference>
<dbReference type="SMART" id="SM00398">
    <property type="entry name" value="HMG"/>
    <property type="match status" value="1"/>
</dbReference>
<dbReference type="SUPFAM" id="SSF47095">
    <property type="entry name" value="HMG-box"/>
    <property type="match status" value="1"/>
</dbReference>
<dbReference type="PROSITE" id="PS50118">
    <property type="entry name" value="HMG_BOX_2"/>
    <property type="match status" value="1"/>
</dbReference>
<protein>
    <recommendedName>
        <fullName evidence="2">Transcription factor Sox-2</fullName>
    </recommendedName>
    <alternativeName>
        <fullName>SRY (sex determining region Y)-box 2</fullName>
    </alternativeName>
</protein>
<evidence type="ECO:0000250" key="1"/>
<evidence type="ECO:0000250" key="2">
    <source>
        <dbReference type="UniProtKB" id="O42569"/>
    </source>
</evidence>
<evidence type="ECO:0000250" key="3">
    <source>
        <dbReference type="UniProtKB" id="P41225"/>
    </source>
</evidence>
<evidence type="ECO:0000250" key="4">
    <source>
        <dbReference type="UniProtKB" id="P48432"/>
    </source>
</evidence>
<evidence type="ECO:0000255" key="5">
    <source>
        <dbReference type="PROSITE-ProRule" id="PRU00267"/>
    </source>
</evidence>
<evidence type="ECO:0000256" key="6">
    <source>
        <dbReference type="SAM" id="MobiDB-lite"/>
    </source>
</evidence>
<evidence type="ECO:0000312" key="7">
    <source>
        <dbReference type="EMBL" id="AAH67975.1"/>
    </source>
</evidence>
<evidence type="ECO:0000312" key="8">
    <source>
        <dbReference type="EMBL" id="CAJ82651.1"/>
    </source>
</evidence>